<keyword id="KW-1064">Adaptive immunity</keyword>
<keyword id="KW-0106">Calcium</keyword>
<keyword id="KW-1015">Disulfide bond</keyword>
<keyword id="KW-0254">Endocytosis</keyword>
<keyword id="KW-0325">Glycoprotein</keyword>
<keyword id="KW-0391">Immunity</keyword>
<keyword id="KW-0399">Innate immunity</keyword>
<keyword id="KW-0430">Lectin</keyword>
<keyword id="KW-0465">Mannose-binding</keyword>
<keyword id="KW-0472">Membrane</keyword>
<keyword id="KW-0479">Metal-binding</keyword>
<keyword id="KW-0675">Receptor</keyword>
<keyword id="KW-0677">Repeat</keyword>
<keyword id="KW-0735">Signal-anchor</keyword>
<keyword id="KW-0812">Transmembrane</keyword>
<keyword id="KW-1133">Transmembrane helix</keyword>
<dbReference type="EMBL" id="AY078820">
    <property type="protein sequence ID" value="AAL89529.1"/>
    <property type="molecule type" value="Genomic_DNA"/>
</dbReference>
<dbReference type="EMBL" id="AY078814">
    <property type="protein sequence ID" value="AAL89529.1"/>
    <property type="status" value="JOINED"/>
    <property type="molecule type" value="Genomic_DNA"/>
</dbReference>
<dbReference type="EMBL" id="AY078815">
    <property type="protein sequence ID" value="AAL89529.1"/>
    <property type="status" value="JOINED"/>
    <property type="molecule type" value="Genomic_DNA"/>
</dbReference>
<dbReference type="EMBL" id="AY078816">
    <property type="protein sequence ID" value="AAL89529.1"/>
    <property type="status" value="JOINED"/>
    <property type="molecule type" value="Genomic_DNA"/>
</dbReference>
<dbReference type="EMBL" id="AY078817">
    <property type="protein sequence ID" value="AAL89529.1"/>
    <property type="status" value="JOINED"/>
    <property type="molecule type" value="Genomic_DNA"/>
</dbReference>
<dbReference type="EMBL" id="AY078818">
    <property type="protein sequence ID" value="AAL89529.1"/>
    <property type="status" value="JOINED"/>
    <property type="molecule type" value="Genomic_DNA"/>
</dbReference>
<dbReference type="EMBL" id="AY078819">
    <property type="protein sequence ID" value="AAL89529.1"/>
    <property type="status" value="JOINED"/>
    <property type="molecule type" value="Genomic_DNA"/>
</dbReference>
<dbReference type="SMR" id="Q8HY11"/>
<dbReference type="GlyCosmos" id="Q8HY11">
    <property type="glycosylation" value="2 sites, No reported glycans"/>
</dbReference>
<dbReference type="GO" id="GO:0016020">
    <property type="term" value="C:membrane"/>
    <property type="evidence" value="ECO:0007669"/>
    <property type="project" value="UniProtKB-SubCell"/>
</dbReference>
<dbReference type="GO" id="GO:0005537">
    <property type="term" value="F:D-mannose binding"/>
    <property type="evidence" value="ECO:0007669"/>
    <property type="project" value="UniProtKB-KW"/>
</dbReference>
<dbReference type="GO" id="GO:0046872">
    <property type="term" value="F:metal ion binding"/>
    <property type="evidence" value="ECO:0007669"/>
    <property type="project" value="UniProtKB-KW"/>
</dbReference>
<dbReference type="GO" id="GO:0002250">
    <property type="term" value="P:adaptive immune response"/>
    <property type="evidence" value="ECO:0007669"/>
    <property type="project" value="UniProtKB-KW"/>
</dbReference>
<dbReference type="GO" id="GO:0006897">
    <property type="term" value="P:endocytosis"/>
    <property type="evidence" value="ECO:0007669"/>
    <property type="project" value="UniProtKB-KW"/>
</dbReference>
<dbReference type="GO" id="GO:0045087">
    <property type="term" value="P:innate immune response"/>
    <property type="evidence" value="ECO:0007669"/>
    <property type="project" value="UniProtKB-KW"/>
</dbReference>
<dbReference type="CDD" id="cd03590">
    <property type="entry name" value="CLECT_DC-SIGN_like"/>
    <property type="match status" value="1"/>
</dbReference>
<dbReference type="FunFam" id="3.10.100.10:FF:000044">
    <property type="entry name" value="CD209 antigen, isoform CRA_b"/>
    <property type="match status" value="1"/>
</dbReference>
<dbReference type="Gene3D" id="3.10.100.10">
    <property type="entry name" value="Mannose-Binding Protein A, subunit A"/>
    <property type="match status" value="1"/>
</dbReference>
<dbReference type="InterPro" id="IPR001304">
    <property type="entry name" value="C-type_lectin-like"/>
</dbReference>
<dbReference type="InterPro" id="IPR016186">
    <property type="entry name" value="C-type_lectin-like/link_sf"/>
</dbReference>
<dbReference type="InterPro" id="IPR050111">
    <property type="entry name" value="C-type_lectin/snaclec_domain"/>
</dbReference>
<dbReference type="InterPro" id="IPR018378">
    <property type="entry name" value="C-type_lectin_CS"/>
</dbReference>
<dbReference type="InterPro" id="IPR033989">
    <property type="entry name" value="CD209-like_CTLD"/>
</dbReference>
<dbReference type="InterPro" id="IPR016187">
    <property type="entry name" value="CTDL_fold"/>
</dbReference>
<dbReference type="PANTHER" id="PTHR22803">
    <property type="entry name" value="MANNOSE, PHOSPHOLIPASE, LECTIN RECEPTOR RELATED"/>
    <property type="match status" value="1"/>
</dbReference>
<dbReference type="Pfam" id="PF00059">
    <property type="entry name" value="Lectin_C"/>
    <property type="match status" value="1"/>
</dbReference>
<dbReference type="SMART" id="SM00034">
    <property type="entry name" value="CLECT"/>
    <property type="match status" value="1"/>
</dbReference>
<dbReference type="SUPFAM" id="SSF56436">
    <property type="entry name" value="C-type lectin-like"/>
    <property type="match status" value="1"/>
</dbReference>
<dbReference type="PROSITE" id="PS00615">
    <property type="entry name" value="C_TYPE_LECTIN_1"/>
    <property type="match status" value="1"/>
</dbReference>
<dbReference type="PROSITE" id="PS50041">
    <property type="entry name" value="C_TYPE_LECTIN_2"/>
    <property type="match status" value="1"/>
</dbReference>
<comment type="function">
    <text evidence="1">Probable pathogen-recognition receptor involved in peripheral immune surveillance in liver. May mediate the endocytosis of pathogens which are subsequently degraded in lysosomal compartments. Probably recognizes in a calcium-dependent manner high mannose N-linked oligosaccharides in a variety of pathogen antigens. Is a receptor for ICAM3, probably by binding to mannose-like carbohydrates (By similarity).</text>
</comment>
<comment type="subunit">
    <text evidence="1">Homotetramer.</text>
</comment>
<comment type="subcellular location">
    <subcellularLocation>
        <location evidence="1">Membrane</location>
        <topology evidence="1">Single-pass type II membrane protein</topology>
    </subcellularLocation>
</comment>
<comment type="domain">
    <text evidence="1">The tandem repeat domain, also called neck domain, mediates oligomerization.</text>
</comment>
<name>CLC4M_SYMSY</name>
<feature type="chain" id="PRO_0000046629" description="C-type lectin domain family 4 member M">
    <location>
        <begin position="1"/>
        <end position="422"/>
    </location>
</feature>
<feature type="topological domain" description="Cytoplasmic" evidence="2">
    <location>
        <begin position="1"/>
        <end position="49"/>
    </location>
</feature>
<feature type="transmembrane region" description="Helical; Signal-anchor for type II membrane protein" evidence="2">
    <location>
        <begin position="50"/>
        <end position="70"/>
    </location>
</feature>
<feature type="topological domain" description="Extracellular" evidence="2">
    <location>
        <begin position="71"/>
        <end position="422"/>
    </location>
</feature>
<feature type="repeat" description="1">
    <location>
        <begin position="108"/>
        <end position="130"/>
    </location>
</feature>
<feature type="repeat" description="2">
    <location>
        <begin position="131"/>
        <end position="151"/>
    </location>
</feature>
<feature type="repeat" description="3">
    <location>
        <begin position="154"/>
        <end position="176"/>
    </location>
</feature>
<feature type="repeat" description="4">
    <location>
        <begin position="177"/>
        <end position="199"/>
    </location>
</feature>
<feature type="repeat" description="5">
    <location>
        <begin position="200"/>
        <end position="222"/>
    </location>
</feature>
<feature type="repeat" description="6">
    <location>
        <begin position="223"/>
        <end position="245"/>
    </location>
</feature>
<feature type="repeat" description="7">
    <location>
        <begin position="246"/>
        <end position="268"/>
    </location>
</feature>
<feature type="repeat" description="8">
    <location>
        <begin position="269"/>
        <end position="291"/>
    </location>
</feature>
<feature type="domain" description="C-type lectin" evidence="3">
    <location>
        <begin position="297"/>
        <end position="413"/>
    </location>
</feature>
<feature type="region of interest" description="8 X approximate tandem repeats">
    <location>
        <begin position="108"/>
        <end position="292"/>
    </location>
</feature>
<feature type="short sequence motif" description="Endocytosis signal" evidence="1">
    <location>
        <begin position="14"/>
        <end position="15"/>
    </location>
</feature>
<feature type="binding site" evidence="1">
    <location>
        <position position="382"/>
    </location>
    <ligand>
        <name>Ca(2+)</name>
        <dbReference type="ChEBI" id="CHEBI:29108"/>
    </ligand>
</feature>
<feature type="binding site" evidence="1">
    <location>
        <position position="384"/>
    </location>
    <ligand>
        <name>Ca(2+)</name>
        <dbReference type="ChEBI" id="CHEBI:29108"/>
    </ligand>
</feature>
<feature type="binding site" evidence="1">
    <location>
        <position position="386"/>
    </location>
    <ligand>
        <name>Ca(2+)</name>
        <dbReference type="ChEBI" id="CHEBI:29108"/>
    </ligand>
</feature>
<feature type="binding site" evidence="1">
    <location>
        <position position="389"/>
    </location>
    <ligand>
        <name>Ca(2+)</name>
        <dbReference type="ChEBI" id="CHEBI:29108"/>
    </ligand>
</feature>
<feature type="binding site" evidence="1">
    <location>
        <position position="400"/>
    </location>
    <ligand>
        <name>Ca(2+)</name>
        <dbReference type="ChEBI" id="CHEBI:29108"/>
    </ligand>
</feature>
<feature type="binding site" evidence="1">
    <location>
        <position position="401"/>
    </location>
    <ligand>
        <name>Ca(2+)</name>
        <dbReference type="ChEBI" id="CHEBI:29108"/>
    </ligand>
</feature>
<feature type="glycosylation site" description="N-linked (GlcNAc...) asparagine" evidence="2">
    <location>
        <position position="92"/>
    </location>
</feature>
<feature type="glycosylation site" description="N-linked (GlcNAc...) asparagine" evidence="2">
    <location>
        <position position="384"/>
    </location>
</feature>
<feature type="disulfide bond" evidence="3">
    <location>
        <begin position="288"/>
        <end position="418"/>
    </location>
</feature>
<feature type="disulfide bond" evidence="3">
    <location>
        <begin position="291"/>
        <end position="302"/>
    </location>
</feature>
<feature type="disulfide bond" evidence="3">
    <location>
        <begin position="319"/>
        <end position="412"/>
    </location>
</feature>
<feature type="disulfide bond" evidence="3">
    <location>
        <begin position="391"/>
        <end position="404"/>
    </location>
</feature>
<accession>Q8HY11</accession>
<evidence type="ECO:0000250" key="1"/>
<evidence type="ECO:0000255" key="2"/>
<evidence type="ECO:0000255" key="3">
    <source>
        <dbReference type="PROSITE-ProRule" id="PRU00040"/>
    </source>
</evidence>
<proteinExistence type="inferred from homology"/>
<gene>
    <name type="primary">CLEC4M</name>
    <name type="synonym">CD209L1</name>
</gene>
<sequence>MSDSKEPRVQPLGLLEEDPTTSGIRLFPRDFQFQQTHGHKSSTGCLGHGPLVLQLLSFALLAGVLVAILVQVYKVPSSLSQEQSEQDVIYQNLTQLKAAVGELSEKSKLQEIYQELTQLKAAVGELPEKSKQQEIYQELTQLKASVGELPEKSQLQEIYQELTRLKAAVGELPEESRLQEIYQELTRLKAAVGELPEKSRLQEIYQELTRLKAAVGELPEKSRLQEIYQELTRLKAAVGELPEKSKLQEIYQELTRLKAAVGELPDQSKQQQIYQELTDLKTAFERLCCRCPKDWTFFQGNCYFMSNSQRNWHDSVTACQEVGAQLVVIKSAEEQNFLQLQTSRSNRFSWMGLSDLNQEGTWQWVDGSPLSSSFQRYWNSGEPNNSGDEDCAEFSGSGWNDNRCNVDNYWICKKPIACFRDE</sequence>
<organism>
    <name type="scientific">Symphalangus syndactylus</name>
    <name type="common">Siamang</name>
    <name type="synonym">Hylobates syndactylus</name>
    <dbReference type="NCBI Taxonomy" id="9590"/>
    <lineage>
        <taxon>Eukaryota</taxon>
        <taxon>Metazoa</taxon>
        <taxon>Chordata</taxon>
        <taxon>Craniata</taxon>
        <taxon>Vertebrata</taxon>
        <taxon>Euteleostomi</taxon>
        <taxon>Mammalia</taxon>
        <taxon>Eutheria</taxon>
        <taxon>Euarchontoglires</taxon>
        <taxon>Primates</taxon>
        <taxon>Haplorrhini</taxon>
        <taxon>Catarrhini</taxon>
        <taxon>Hylobatidae</taxon>
        <taxon>Symphalangus</taxon>
    </lineage>
</organism>
<reference key="1">
    <citation type="journal article" date="2003" name="J. Virol.">
        <title>Novel member of the CD209 (DC-SIGN) gene family in primates.</title>
        <authorList>
            <person name="Bashirova A.A."/>
            <person name="Wu L."/>
            <person name="Cheng J."/>
            <person name="Martin T.D."/>
            <person name="Martin M.P."/>
            <person name="Benveniste R.E."/>
            <person name="Lifson J.D."/>
            <person name="Kewalramani V.N."/>
            <person name="Hughes A."/>
            <person name="Carrington M."/>
        </authorList>
    </citation>
    <scope>NUCLEOTIDE SEQUENCE [GENOMIC DNA]</scope>
    <source>
        <strain>Isolate B1533</strain>
    </source>
</reference>
<protein>
    <recommendedName>
        <fullName>C-type lectin domain family 4 member M</fullName>
    </recommendedName>
    <alternativeName>
        <fullName>CD209 antigen-like protein 1</fullName>
    </alternativeName>
    <cdAntigenName>CD299</cdAntigenName>
</protein>